<gene>
    <name evidence="1" type="primary">rpmJ</name>
    <name type="ordered locus">RHOS4_30100</name>
    <name type="ORF">RSP_1398</name>
</gene>
<reference key="1">
    <citation type="submission" date="2005-09" db="EMBL/GenBank/DDBJ databases">
        <title>Complete sequence of chromosome 1 of Rhodobacter sphaeroides 2.4.1.</title>
        <authorList>
            <person name="Copeland A."/>
            <person name="Lucas S."/>
            <person name="Lapidus A."/>
            <person name="Barry K."/>
            <person name="Detter J.C."/>
            <person name="Glavina T."/>
            <person name="Hammon N."/>
            <person name="Israni S."/>
            <person name="Pitluck S."/>
            <person name="Richardson P."/>
            <person name="Mackenzie C."/>
            <person name="Choudhary M."/>
            <person name="Larimer F."/>
            <person name="Hauser L.J."/>
            <person name="Land M."/>
            <person name="Donohue T.J."/>
            <person name="Kaplan S."/>
        </authorList>
    </citation>
    <scope>NUCLEOTIDE SEQUENCE [LARGE SCALE GENOMIC DNA]</scope>
    <source>
        <strain>ATCC 17023 / DSM 158 / JCM 6121 / CCUG 31486 / LMG 2827 / NBRC 12203 / NCIMB 8253 / ATH 2.4.1.</strain>
    </source>
</reference>
<sequence>MKVANSLRSLKLRHRDCQVVRRKGRVYVINKTQKRYKARQG</sequence>
<protein>
    <recommendedName>
        <fullName evidence="1">Large ribosomal subunit protein bL36</fullName>
    </recommendedName>
    <alternativeName>
        <fullName evidence="2">50S ribosomal protein L36</fullName>
    </alternativeName>
</protein>
<accession>Q3IY06</accession>
<feature type="chain" id="PRO_0000302280" description="Large ribosomal subunit protein bL36">
    <location>
        <begin position="1"/>
        <end position="41"/>
    </location>
</feature>
<evidence type="ECO:0000255" key="1">
    <source>
        <dbReference type="HAMAP-Rule" id="MF_00251"/>
    </source>
</evidence>
<evidence type="ECO:0000305" key="2"/>
<name>RL36_CERS4</name>
<comment type="similarity">
    <text evidence="1">Belongs to the bacterial ribosomal protein bL36 family.</text>
</comment>
<dbReference type="EMBL" id="CP000143">
    <property type="protein sequence ID" value="ABA80578.1"/>
    <property type="molecule type" value="Genomic_DNA"/>
</dbReference>
<dbReference type="RefSeq" id="YP_354479.1">
    <property type="nucleotide sequence ID" value="NC_007493.2"/>
</dbReference>
<dbReference type="SMR" id="Q3IY06"/>
<dbReference type="STRING" id="272943.RSP_1398"/>
<dbReference type="EnsemblBacteria" id="ABA80578">
    <property type="protein sequence ID" value="ABA80578"/>
    <property type="gene ID" value="RSP_1398"/>
</dbReference>
<dbReference type="KEGG" id="rsp:RSP_1398"/>
<dbReference type="PATRIC" id="fig|272943.9.peg.3381"/>
<dbReference type="eggNOG" id="COG0257">
    <property type="taxonomic scope" value="Bacteria"/>
</dbReference>
<dbReference type="OrthoDB" id="9801558at2"/>
<dbReference type="PhylomeDB" id="Q3IY06"/>
<dbReference type="Proteomes" id="UP000002703">
    <property type="component" value="Chromosome 1"/>
</dbReference>
<dbReference type="GO" id="GO:1990904">
    <property type="term" value="C:ribonucleoprotein complex"/>
    <property type="evidence" value="ECO:0007669"/>
    <property type="project" value="UniProtKB-KW"/>
</dbReference>
<dbReference type="GO" id="GO:0005840">
    <property type="term" value="C:ribosome"/>
    <property type="evidence" value="ECO:0007669"/>
    <property type="project" value="UniProtKB-KW"/>
</dbReference>
<dbReference type="GO" id="GO:0003735">
    <property type="term" value="F:structural constituent of ribosome"/>
    <property type="evidence" value="ECO:0007669"/>
    <property type="project" value="InterPro"/>
</dbReference>
<dbReference type="GO" id="GO:0006412">
    <property type="term" value="P:translation"/>
    <property type="evidence" value="ECO:0007669"/>
    <property type="project" value="UniProtKB-UniRule"/>
</dbReference>
<dbReference type="HAMAP" id="MF_00251">
    <property type="entry name" value="Ribosomal_bL36"/>
    <property type="match status" value="1"/>
</dbReference>
<dbReference type="InterPro" id="IPR000473">
    <property type="entry name" value="Ribosomal_bL36"/>
</dbReference>
<dbReference type="InterPro" id="IPR035977">
    <property type="entry name" value="Ribosomal_bL36_sp"/>
</dbReference>
<dbReference type="InterPro" id="IPR047621">
    <property type="entry name" value="Ribosomal_L36_bact"/>
</dbReference>
<dbReference type="NCBIfam" id="NF002021">
    <property type="entry name" value="PRK00831.1"/>
    <property type="match status" value="1"/>
</dbReference>
<dbReference type="NCBIfam" id="TIGR01022">
    <property type="entry name" value="rpmJ_bact"/>
    <property type="match status" value="1"/>
</dbReference>
<dbReference type="PANTHER" id="PTHR47781">
    <property type="entry name" value="50S RIBOSOMAL PROTEIN L36 2"/>
    <property type="match status" value="1"/>
</dbReference>
<dbReference type="PANTHER" id="PTHR47781:SF1">
    <property type="entry name" value="LARGE RIBOSOMAL SUBUNIT PROTEIN BL36B"/>
    <property type="match status" value="1"/>
</dbReference>
<dbReference type="Pfam" id="PF00444">
    <property type="entry name" value="Ribosomal_L36"/>
    <property type="match status" value="1"/>
</dbReference>
<dbReference type="SUPFAM" id="SSF57840">
    <property type="entry name" value="Ribosomal protein L36"/>
    <property type="match status" value="1"/>
</dbReference>
<organism>
    <name type="scientific">Cereibacter sphaeroides (strain ATCC 17023 / DSM 158 / JCM 6121 / CCUG 31486 / LMG 2827 / NBRC 12203 / NCIMB 8253 / ATH 2.4.1.)</name>
    <name type="common">Rhodobacter sphaeroides</name>
    <dbReference type="NCBI Taxonomy" id="272943"/>
    <lineage>
        <taxon>Bacteria</taxon>
        <taxon>Pseudomonadati</taxon>
        <taxon>Pseudomonadota</taxon>
        <taxon>Alphaproteobacteria</taxon>
        <taxon>Rhodobacterales</taxon>
        <taxon>Paracoccaceae</taxon>
        <taxon>Cereibacter</taxon>
    </lineage>
</organism>
<proteinExistence type="inferred from homology"/>
<keyword id="KW-1185">Reference proteome</keyword>
<keyword id="KW-0687">Ribonucleoprotein</keyword>
<keyword id="KW-0689">Ribosomal protein</keyword>